<sequence>MSRGIIIIGSGFAARQLVKNIRKQDAHVPLTLIAADSMDEYNKPDLSHVISQSQRADDLTRQLAGEFAEQFNLRLFPHTWVADIDADAHVVKSQDKQWQYDKLVLATGATAFVPPIAGRELMLTLNSQQEYRACETQLRDAQRVLIVGGGLIGSELAMDFCRAGKTVTLMDNAASLLASLMPPEVSSRLQHHLTDMGVHLLLKSQLQKLEKTEAGIRATLVSQHSIEVDAVIAATGLRPETALARRAGVVVNRGVCVDSYLQTSHPDIYAIGDCAEINGQVLPFLQPIQLSAMYLAKNLLGGNAPLKLPAMLVKVKTPELPLHLAGETQRRDLSWHITAESDGMIAKGMSGEGQLRAFVVSEDRMKEAFALLKTLSV</sequence>
<name>NORW_SALDC</name>
<reference key="1">
    <citation type="journal article" date="2011" name="J. Bacteriol.">
        <title>Comparative genomics of 28 Salmonella enterica isolates: evidence for CRISPR-mediated adaptive sublineage evolution.</title>
        <authorList>
            <person name="Fricke W.F."/>
            <person name="Mammel M.K."/>
            <person name="McDermott P.F."/>
            <person name="Tartera C."/>
            <person name="White D.G."/>
            <person name="Leclerc J.E."/>
            <person name="Ravel J."/>
            <person name="Cebula T.A."/>
        </authorList>
    </citation>
    <scope>NUCLEOTIDE SEQUENCE [LARGE SCALE GENOMIC DNA]</scope>
    <source>
        <strain>CT_02021853</strain>
    </source>
</reference>
<keyword id="KW-0963">Cytoplasm</keyword>
<keyword id="KW-0274">FAD</keyword>
<keyword id="KW-0285">Flavoprotein</keyword>
<keyword id="KW-0520">NAD</keyword>
<keyword id="KW-0560">Oxidoreductase</keyword>
<dbReference type="EC" id="1.18.1.-" evidence="1"/>
<dbReference type="EMBL" id="CP001144">
    <property type="protein sequence ID" value="ACH77429.1"/>
    <property type="molecule type" value="Genomic_DNA"/>
</dbReference>
<dbReference type="RefSeq" id="WP_000086336.1">
    <property type="nucleotide sequence ID" value="NC_011205.1"/>
</dbReference>
<dbReference type="SMR" id="B5FSZ2"/>
<dbReference type="KEGG" id="sed:SeD_A3150"/>
<dbReference type="HOGENOM" id="CLU_003291_4_4_6"/>
<dbReference type="UniPathway" id="UPA00638"/>
<dbReference type="Proteomes" id="UP000008322">
    <property type="component" value="Chromosome"/>
</dbReference>
<dbReference type="GO" id="GO:0005737">
    <property type="term" value="C:cytoplasm"/>
    <property type="evidence" value="ECO:0007669"/>
    <property type="project" value="UniProtKB-SubCell"/>
</dbReference>
<dbReference type="GO" id="GO:0016731">
    <property type="term" value="F:oxidoreductase activity, acting on iron-sulfur proteins as donors, NAD or NADP as acceptor"/>
    <property type="evidence" value="ECO:0007669"/>
    <property type="project" value="UniProtKB-UniRule"/>
</dbReference>
<dbReference type="Gene3D" id="3.30.390.120">
    <property type="match status" value="1"/>
</dbReference>
<dbReference type="Gene3D" id="3.50.50.60">
    <property type="entry name" value="FAD/NAD(P)-binding domain"/>
    <property type="match status" value="2"/>
</dbReference>
<dbReference type="HAMAP" id="MF_01313">
    <property type="entry name" value="NorW"/>
    <property type="match status" value="1"/>
</dbReference>
<dbReference type="InterPro" id="IPR050260">
    <property type="entry name" value="FAD-bd_OxRdtase"/>
</dbReference>
<dbReference type="InterPro" id="IPR036188">
    <property type="entry name" value="FAD/NAD-bd_sf"/>
</dbReference>
<dbReference type="InterPro" id="IPR023753">
    <property type="entry name" value="FAD/NAD-binding_dom"/>
</dbReference>
<dbReference type="InterPro" id="IPR023961">
    <property type="entry name" value="NO_rdtase_NorW"/>
</dbReference>
<dbReference type="InterPro" id="IPR041364">
    <property type="entry name" value="Rbx-bd"/>
</dbReference>
<dbReference type="NCBIfam" id="NF003437">
    <property type="entry name" value="PRK04965.1"/>
    <property type="match status" value="1"/>
</dbReference>
<dbReference type="PANTHER" id="PTHR43429:SF3">
    <property type="entry name" value="NITRITE REDUCTASE [NAD(P)H]"/>
    <property type="match status" value="1"/>
</dbReference>
<dbReference type="PANTHER" id="PTHR43429">
    <property type="entry name" value="PYRIDINE NUCLEOTIDE-DISULFIDE OXIDOREDUCTASE DOMAIN-CONTAINING"/>
    <property type="match status" value="1"/>
</dbReference>
<dbReference type="Pfam" id="PF07992">
    <property type="entry name" value="Pyr_redox_2"/>
    <property type="match status" value="1"/>
</dbReference>
<dbReference type="Pfam" id="PF18113">
    <property type="entry name" value="Rbx_binding"/>
    <property type="match status" value="1"/>
</dbReference>
<dbReference type="PRINTS" id="PR00368">
    <property type="entry name" value="FADPNR"/>
</dbReference>
<dbReference type="PRINTS" id="PR00411">
    <property type="entry name" value="PNDRDTASEI"/>
</dbReference>
<dbReference type="SUPFAM" id="SSF51905">
    <property type="entry name" value="FAD/NAD(P)-binding domain"/>
    <property type="match status" value="1"/>
</dbReference>
<gene>
    <name evidence="1" type="primary">norW</name>
    <name evidence="1" type="synonym">flrR</name>
    <name type="ordered locus">SeD_A3150</name>
</gene>
<organism>
    <name type="scientific">Salmonella dublin (strain CT_02021853)</name>
    <dbReference type="NCBI Taxonomy" id="439851"/>
    <lineage>
        <taxon>Bacteria</taxon>
        <taxon>Pseudomonadati</taxon>
        <taxon>Pseudomonadota</taxon>
        <taxon>Gammaproteobacteria</taxon>
        <taxon>Enterobacterales</taxon>
        <taxon>Enterobacteriaceae</taxon>
        <taxon>Salmonella</taxon>
    </lineage>
</organism>
<evidence type="ECO:0000255" key="1">
    <source>
        <dbReference type="HAMAP-Rule" id="MF_01313"/>
    </source>
</evidence>
<feature type="chain" id="PRO_1000141178" description="Nitric oxide reductase FlRd-NAD(+) reductase">
    <location>
        <begin position="1"/>
        <end position="377"/>
    </location>
</feature>
<comment type="function">
    <text evidence="1">One of at least two accessory proteins for anaerobic nitric oxide (NO) reductase. Reduces the rubredoxin moiety of NO reductase.</text>
</comment>
<comment type="catalytic activity">
    <reaction evidence="1">
        <text>2 reduced [nitric oxide reductase rubredoxin domain] + NAD(+) + H(+) = 2 oxidized [nitric oxide reductase rubredoxin domain] + NADH</text>
        <dbReference type="Rhea" id="RHEA:42960"/>
        <dbReference type="Rhea" id="RHEA-COMP:10304"/>
        <dbReference type="Rhea" id="RHEA-COMP:10305"/>
        <dbReference type="ChEBI" id="CHEBI:15378"/>
        <dbReference type="ChEBI" id="CHEBI:29033"/>
        <dbReference type="ChEBI" id="CHEBI:29034"/>
        <dbReference type="ChEBI" id="CHEBI:57540"/>
        <dbReference type="ChEBI" id="CHEBI:57945"/>
    </reaction>
</comment>
<comment type="cofactor">
    <cofactor evidence="1">
        <name>FAD</name>
        <dbReference type="ChEBI" id="CHEBI:57692"/>
    </cofactor>
</comment>
<comment type="pathway">
    <text evidence="1">Nitrogen metabolism; nitric oxide reduction.</text>
</comment>
<comment type="subcellular location">
    <subcellularLocation>
        <location evidence="1">Cytoplasm</location>
    </subcellularLocation>
</comment>
<comment type="similarity">
    <text evidence="1">Belongs to the FAD-dependent oxidoreductase family.</text>
</comment>
<protein>
    <recommendedName>
        <fullName evidence="1">Nitric oxide reductase FlRd-NAD(+) reductase</fullName>
        <ecNumber evidence="1">1.18.1.-</ecNumber>
    </recommendedName>
    <alternativeName>
        <fullName evidence="1">Flavorubredoxin reductase</fullName>
        <shortName evidence="1">FlRd-reductase</shortName>
        <shortName evidence="1">FlavoRb reductase</shortName>
    </alternativeName>
</protein>
<accession>B5FSZ2</accession>
<proteinExistence type="inferred from homology"/>